<gene>
    <name evidence="1" type="primary">ihfA</name>
    <name evidence="1" type="synonym">himA</name>
    <name type="ordered locus">CKO_01739</name>
</gene>
<name>IHFA_CITK8</name>
<reference key="1">
    <citation type="submission" date="2007-08" db="EMBL/GenBank/DDBJ databases">
        <authorList>
            <consortium name="The Citrobacter koseri Genome Sequencing Project"/>
            <person name="McClelland M."/>
            <person name="Sanderson E.K."/>
            <person name="Porwollik S."/>
            <person name="Spieth J."/>
            <person name="Clifton W.S."/>
            <person name="Latreille P."/>
            <person name="Courtney L."/>
            <person name="Wang C."/>
            <person name="Pepin K."/>
            <person name="Bhonagiri V."/>
            <person name="Nash W."/>
            <person name="Johnson M."/>
            <person name="Thiruvilangam P."/>
            <person name="Wilson R."/>
        </authorList>
    </citation>
    <scope>NUCLEOTIDE SEQUENCE [LARGE SCALE GENOMIC DNA]</scope>
    <source>
        <strain>ATCC BAA-895 / CDC 4225-83 / SGSC4696</strain>
    </source>
</reference>
<accession>A8AHA5</accession>
<proteinExistence type="inferred from homology"/>
<keyword id="KW-0233">DNA recombination</keyword>
<keyword id="KW-0238">DNA-binding</keyword>
<keyword id="KW-1185">Reference proteome</keyword>
<keyword id="KW-0804">Transcription</keyword>
<keyword id="KW-0805">Transcription regulation</keyword>
<keyword id="KW-0810">Translation regulation</keyword>
<sequence length="99" mass="11368">MALTKAEMSEYLFDKLGLSKRDAKELVELFFEEIRRALENGEQVKLSGFGNFDLRDKNQRPGRNPKTGEDIPITARRVVTFRPGQKLKSRVENASPKEE</sequence>
<evidence type="ECO:0000255" key="1">
    <source>
        <dbReference type="HAMAP-Rule" id="MF_00380"/>
    </source>
</evidence>
<evidence type="ECO:0000256" key="2">
    <source>
        <dbReference type="SAM" id="MobiDB-lite"/>
    </source>
</evidence>
<feature type="chain" id="PRO_1000060539" description="Integration host factor subunit alpha">
    <location>
        <begin position="1"/>
        <end position="99"/>
    </location>
</feature>
<feature type="region of interest" description="Disordered" evidence="2">
    <location>
        <begin position="49"/>
        <end position="75"/>
    </location>
</feature>
<comment type="function">
    <text evidence="1">This protein is one of the two subunits of integration host factor, a specific DNA-binding protein that functions in genetic recombination as well as in transcriptional and translational control.</text>
</comment>
<comment type="subunit">
    <text evidence="1">Heterodimer of an alpha and a beta chain.</text>
</comment>
<comment type="similarity">
    <text evidence="1">Belongs to the bacterial histone-like protein family.</text>
</comment>
<protein>
    <recommendedName>
        <fullName evidence="1">Integration host factor subunit alpha</fullName>
        <shortName evidence="1">IHF-alpha</shortName>
    </recommendedName>
</protein>
<organism>
    <name type="scientific">Citrobacter koseri (strain ATCC BAA-895 / CDC 4225-83 / SGSC4696)</name>
    <dbReference type="NCBI Taxonomy" id="290338"/>
    <lineage>
        <taxon>Bacteria</taxon>
        <taxon>Pseudomonadati</taxon>
        <taxon>Pseudomonadota</taxon>
        <taxon>Gammaproteobacteria</taxon>
        <taxon>Enterobacterales</taxon>
        <taxon>Enterobacteriaceae</taxon>
        <taxon>Citrobacter</taxon>
    </lineage>
</organism>
<dbReference type="EMBL" id="CP000822">
    <property type="protein sequence ID" value="ABV12868.1"/>
    <property type="molecule type" value="Genomic_DNA"/>
</dbReference>
<dbReference type="RefSeq" id="WP_001229266.1">
    <property type="nucleotide sequence ID" value="NC_009792.1"/>
</dbReference>
<dbReference type="SMR" id="A8AHA5"/>
<dbReference type="STRING" id="290338.CKO_01739"/>
<dbReference type="GeneID" id="92828695"/>
<dbReference type="KEGG" id="cko:CKO_01739"/>
<dbReference type="HOGENOM" id="CLU_105066_1_3_6"/>
<dbReference type="OrthoDB" id="9797747at2"/>
<dbReference type="Proteomes" id="UP000008148">
    <property type="component" value="Chromosome"/>
</dbReference>
<dbReference type="GO" id="GO:0005829">
    <property type="term" value="C:cytosol"/>
    <property type="evidence" value="ECO:0007669"/>
    <property type="project" value="TreeGrafter"/>
</dbReference>
<dbReference type="GO" id="GO:0003677">
    <property type="term" value="F:DNA binding"/>
    <property type="evidence" value="ECO:0007669"/>
    <property type="project" value="UniProtKB-UniRule"/>
</dbReference>
<dbReference type="GO" id="GO:0030527">
    <property type="term" value="F:structural constituent of chromatin"/>
    <property type="evidence" value="ECO:0007669"/>
    <property type="project" value="InterPro"/>
</dbReference>
<dbReference type="GO" id="GO:0006310">
    <property type="term" value="P:DNA recombination"/>
    <property type="evidence" value="ECO:0007669"/>
    <property type="project" value="UniProtKB-UniRule"/>
</dbReference>
<dbReference type="GO" id="GO:0009893">
    <property type="term" value="P:positive regulation of metabolic process"/>
    <property type="evidence" value="ECO:0007669"/>
    <property type="project" value="UniProtKB-ARBA"/>
</dbReference>
<dbReference type="GO" id="GO:0006355">
    <property type="term" value="P:regulation of DNA-templated transcription"/>
    <property type="evidence" value="ECO:0007669"/>
    <property type="project" value="UniProtKB-UniRule"/>
</dbReference>
<dbReference type="GO" id="GO:0006417">
    <property type="term" value="P:regulation of translation"/>
    <property type="evidence" value="ECO:0007669"/>
    <property type="project" value="UniProtKB-UniRule"/>
</dbReference>
<dbReference type="CDD" id="cd13835">
    <property type="entry name" value="IHF_A"/>
    <property type="match status" value="1"/>
</dbReference>
<dbReference type="FunFam" id="4.10.520.10:FF:000002">
    <property type="entry name" value="Integration host factor subunit alpha"/>
    <property type="match status" value="1"/>
</dbReference>
<dbReference type="Gene3D" id="4.10.520.10">
    <property type="entry name" value="IHF-like DNA-binding proteins"/>
    <property type="match status" value="1"/>
</dbReference>
<dbReference type="HAMAP" id="MF_00380">
    <property type="entry name" value="IHF_alpha"/>
    <property type="match status" value="1"/>
</dbReference>
<dbReference type="InterPro" id="IPR000119">
    <property type="entry name" value="Hist_DNA-bd"/>
</dbReference>
<dbReference type="InterPro" id="IPR020816">
    <property type="entry name" value="Histone-like_DNA-bd_CS"/>
</dbReference>
<dbReference type="InterPro" id="IPR010992">
    <property type="entry name" value="IHF-like_DNA-bd_dom_sf"/>
</dbReference>
<dbReference type="InterPro" id="IPR005684">
    <property type="entry name" value="IHF_alpha"/>
</dbReference>
<dbReference type="NCBIfam" id="TIGR00987">
    <property type="entry name" value="himA"/>
    <property type="match status" value="1"/>
</dbReference>
<dbReference type="NCBIfam" id="NF001401">
    <property type="entry name" value="PRK00285.1"/>
    <property type="match status" value="1"/>
</dbReference>
<dbReference type="PANTHER" id="PTHR33175">
    <property type="entry name" value="DNA-BINDING PROTEIN HU"/>
    <property type="match status" value="1"/>
</dbReference>
<dbReference type="PANTHER" id="PTHR33175:SF2">
    <property type="entry name" value="INTEGRATION HOST FACTOR SUBUNIT ALPHA"/>
    <property type="match status" value="1"/>
</dbReference>
<dbReference type="Pfam" id="PF00216">
    <property type="entry name" value="Bac_DNA_binding"/>
    <property type="match status" value="1"/>
</dbReference>
<dbReference type="PRINTS" id="PR01727">
    <property type="entry name" value="DNABINDINGHU"/>
</dbReference>
<dbReference type="SMART" id="SM00411">
    <property type="entry name" value="BHL"/>
    <property type="match status" value="1"/>
</dbReference>
<dbReference type="SUPFAM" id="SSF47729">
    <property type="entry name" value="IHF-like DNA-binding proteins"/>
    <property type="match status" value="1"/>
</dbReference>
<dbReference type="PROSITE" id="PS00045">
    <property type="entry name" value="HISTONE_LIKE"/>
    <property type="match status" value="1"/>
</dbReference>